<organism>
    <name type="scientific">Trieres chinensis</name>
    <name type="common">Marine centric diatom</name>
    <name type="synonym">Odontella sinensis</name>
    <dbReference type="NCBI Taxonomy" id="1514140"/>
    <lineage>
        <taxon>Eukaryota</taxon>
        <taxon>Sar</taxon>
        <taxon>Stramenopiles</taxon>
        <taxon>Ochrophyta</taxon>
        <taxon>Bacillariophyta</taxon>
        <taxon>Mediophyceae</taxon>
        <taxon>Biddulphiophycidae</taxon>
        <taxon>Eupodiscales</taxon>
        <taxon>Parodontellaceae</taxon>
        <taxon>Trieres</taxon>
    </lineage>
</organism>
<accession>P49832</accession>
<sequence>MVWLVWKRSTISRKNKKFFKTIFKKN</sequence>
<comment type="subcellular location">
    <subcellularLocation>
        <location>Plastid</location>
        <location>Chloroplast</location>
    </subcellularLocation>
</comment>
<protein>
    <recommendedName>
        <fullName>Uncharacterized 3.3 kDa protein in psbJ-trnE intergenic region</fullName>
    </recommendedName>
    <alternativeName>
        <fullName>ORF26A</fullName>
    </alternativeName>
</protein>
<name>YCX6_TRICV</name>
<dbReference type="EMBL" id="Z67753">
    <property type="protein sequence ID" value="CAA91714.1"/>
    <property type="molecule type" value="Genomic_DNA"/>
</dbReference>
<dbReference type="PIR" id="S78341">
    <property type="entry name" value="S78341"/>
</dbReference>
<dbReference type="RefSeq" id="NP_043682.1">
    <property type="nucleotide sequence ID" value="NC_001713.1"/>
</dbReference>
<dbReference type="GeneID" id="1457268"/>
<dbReference type="GO" id="GO:0009507">
    <property type="term" value="C:chloroplast"/>
    <property type="evidence" value="ECO:0007669"/>
    <property type="project" value="UniProtKB-SubCell"/>
</dbReference>
<keyword id="KW-0150">Chloroplast</keyword>
<keyword id="KW-0934">Plastid</keyword>
<feature type="chain" id="PRO_0000217458" description="Uncharacterized 3.3 kDa protein in psbJ-trnE intergenic region">
    <location>
        <begin position="1"/>
        <end position="26"/>
    </location>
</feature>
<geneLocation type="chloroplast"/>
<proteinExistence type="predicted"/>
<reference key="1">
    <citation type="journal article" date="1995" name="Plant Mol. Biol. Rep.">
        <title>The chloroplast genome of a chlorophyll a+c-containing alga, Odontella sinensis.</title>
        <authorList>
            <person name="Kowallik K.V."/>
            <person name="Stoebe B."/>
            <person name="Schaffran I."/>
            <person name="Kroth-Pancic P."/>
            <person name="Freier U."/>
        </authorList>
    </citation>
    <scope>NUCLEOTIDE SEQUENCE [LARGE SCALE GENOMIC DNA]</scope>
</reference>